<evidence type="ECO:0000250" key="1"/>
<evidence type="ECO:0000250" key="2">
    <source>
        <dbReference type="UniProtKB" id="P00157"/>
    </source>
</evidence>
<evidence type="ECO:0000255" key="3">
    <source>
        <dbReference type="PROSITE-ProRule" id="PRU00967"/>
    </source>
</evidence>
<evidence type="ECO:0000255" key="4">
    <source>
        <dbReference type="PROSITE-ProRule" id="PRU00968"/>
    </source>
</evidence>
<sequence length="380" mass="42298">MALNLRKNHPLLKIVNDSLIDLPTPSNISTWWNFGSLLGICLVTQIVTGLLLAMHYTADTSLAFTSVAHTCRNVQFGWLIRNLHANGASFFFICIYLHIGRGLYYGSYLNKETWNVGVILLLTLMATAFVGYVLPWGQMSFWGATVITNLFSAIPYIGQTLVEWAWGGFSVDNPTLTRFFALHFLLPFVIAGLTLVHLTFLHETGSNNPLGIPSDCDKIPFHPYYSIKDILGFALMLASLVALALFSPNLLGDPENFTPANPLATPPHIKPEWYFLFAYAILRSIPNKLGGVLALAASILVLFLMPLLHTSKQRSMTFRPLSQILFWVLVTNVLILTWIGSQPVEQPFIIIGQLASLSYFTIILVLFPIAGVLENKMLKL</sequence>
<keyword id="KW-0249">Electron transport</keyword>
<keyword id="KW-0349">Heme</keyword>
<keyword id="KW-0408">Iron</keyword>
<keyword id="KW-0472">Membrane</keyword>
<keyword id="KW-0479">Metal-binding</keyword>
<keyword id="KW-0496">Mitochondrion</keyword>
<keyword id="KW-0999">Mitochondrion inner membrane</keyword>
<keyword id="KW-0679">Respiratory chain</keyword>
<keyword id="KW-0812">Transmembrane</keyword>
<keyword id="KW-1133">Transmembrane helix</keyword>
<keyword id="KW-0813">Transport</keyword>
<keyword id="KW-0830">Ubiquinone</keyword>
<organism>
    <name type="scientific">Vireo olivaceus</name>
    <name type="common">Red-eyed vireo</name>
    <dbReference type="NCBI Taxonomy" id="28733"/>
    <lineage>
        <taxon>Eukaryota</taxon>
        <taxon>Metazoa</taxon>
        <taxon>Chordata</taxon>
        <taxon>Craniata</taxon>
        <taxon>Vertebrata</taxon>
        <taxon>Euteleostomi</taxon>
        <taxon>Archelosauria</taxon>
        <taxon>Archosauria</taxon>
        <taxon>Dinosauria</taxon>
        <taxon>Saurischia</taxon>
        <taxon>Theropoda</taxon>
        <taxon>Coelurosauria</taxon>
        <taxon>Aves</taxon>
        <taxon>Neognathae</taxon>
        <taxon>Neoaves</taxon>
        <taxon>Telluraves</taxon>
        <taxon>Australaves</taxon>
        <taxon>Passeriformes</taxon>
        <taxon>Corvoidea</taxon>
        <taxon>Vireonidae</taxon>
        <taxon>Vireoninae</taxon>
        <taxon>Vireo</taxon>
    </lineage>
</organism>
<comment type="function">
    <text evidence="2">Component of the ubiquinol-cytochrome c reductase complex (complex III or cytochrome b-c1 complex) that is part of the mitochondrial respiratory chain. The b-c1 complex mediates electron transfer from ubiquinol to cytochrome c. Contributes to the generation of a proton gradient across the mitochondrial membrane that is then used for ATP synthesis.</text>
</comment>
<comment type="cofactor">
    <cofactor evidence="2">
        <name>heme b</name>
        <dbReference type="ChEBI" id="CHEBI:60344"/>
    </cofactor>
    <text evidence="2">Binds 2 heme b groups non-covalently.</text>
</comment>
<comment type="subunit">
    <text evidence="2">The cytochrome bc1 complex contains 11 subunits: 3 respiratory subunits (MT-CYB, CYC1 and UQCRFS1), 2 core proteins (UQCRC1 and UQCRC2) and 6 low-molecular weight proteins (UQCRH/QCR6, UQCRB/QCR7, UQCRQ/QCR8, UQCR10/QCR9, UQCR11/QCR10 and a cleavage product of UQCRFS1). This cytochrome bc1 complex then forms a dimer.</text>
</comment>
<comment type="subcellular location">
    <subcellularLocation>
        <location evidence="2">Mitochondrion inner membrane</location>
        <topology evidence="2">Multi-pass membrane protein</topology>
    </subcellularLocation>
</comment>
<comment type="miscellaneous">
    <text evidence="1">Heme 1 (or BL or b562) is low-potential and absorbs at about 562 nm, and heme 2 (or BH or b566) is high-potential and absorbs at about 566 nm.</text>
</comment>
<comment type="similarity">
    <text evidence="3 4">Belongs to the cytochrome b family.</text>
</comment>
<comment type="caution">
    <text evidence="2">The full-length protein contains only eight transmembrane helices, not nine as predicted by bioinformatics tools.</text>
</comment>
<geneLocation type="mitochondrion"/>
<reference key="1">
    <citation type="journal article" date="1993" name="Mol. Biol. Evol.">
        <title>Recovering phylogenetic signal from DNA sequences: relationships within the corvine assemblage (class aves) as inferred from complete sequences of the mitochondrial DNA cytochrome-b gene.</title>
        <authorList>
            <person name="Helm-Bychowski K."/>
            <person name="Cracraft J."/>
        </authorList>
    </citation>
    <scope>NUCLEOTIDE SEQUENCE [GENOMIC DNA]</scope>
</reference>
<reference key="2">
    <citation type="journal article" date="1994" name="Condor">
        <title>The use of cytochrome b sequence variation in estimation of phylogeny in the Vireonidae.</title>
        <authorList>
            <person name="Murray B.W."/>
            <person name="McGillivray W.B."/>
            <person name="Barlow J.C."/>
            <person name="Beech R.N."/>
            <person name="Strobeck C."/>
        </authorList>
    </citation>
    <scope>NUCLEOTIDE SEQUENCE [GENOMIC DNA] OF 41-131</scope>
</reference>
<gene>
    <name type="primary">MT-CYB</name>
    <name type="synonym">COB</name>
    <name type="synonym">CYTB</name>
    <name type="synonym">MTCYB</name>
</gene>
<proteinExistence type="inferred from homology"/>
<name>CYB_VIROL</name>
<feature type="chain" id="PRO_0000061719" description="Cytochrome b">
    <location>
        <begin position="1"/>
        <end position="380"/>
    </location>
</feature>
<feature type="transmembrane region" description="Helical" evidence="2">
    <location>
        <begin position="34"/>
        <end position="54"/>
    </location>
</feature>
<feature type="transmembrane region" description="Helical" evidence="2">
    <location>
        <begin position="78"/>
        <end position="99"/>
    </location>
</feature>
<feature type="transmembrane region" description="Helical" evidence="2">
    <location>
        <begin position="114"/>
        <end position="134"/>
    </location>
</feature>
<feature type="transmembrane region" description="Helical" evidence="2">
    <location>
        <begin position="179"/>
        <end position="199"/>
    </location>
</feature>
<feature type="transmembrane region" description="Helical" evidence="2">
    <location>
        <begin position="227"/>
        <end position="247"/>
    </location>
</feature>
<feature type="transmembrane region" description="Helical" evidence="2">
    <location>
        <begin position="289"/>
        <end position="309"/>
    </location>
</feature>
<feature type="transmembrane region" description="Helical" evidence="2">
    <location>
        <begin position="321"/>
        <end position="341"/>
    </location>
</feature>
<feature type="transmembrane region" description="Helical" evidence="2">
    <location>
        <begin position="348"/>
        <end position="368"/>
    </location>
</feature>
<feature type="binding site" description="axial binding residue" evidence="2">
    <location>
        <position position="84"/>
    </location>
    <ligand>
        <name>heme b</name>
        <dbReference type="ChEBI" id="CHEBI:60344"/>
        <label>b562</label>
    </ligand>
    <ligandPart>
        <name>Fe</name>
        <dbReference type="ChEBI" id="CHEBI:18248"/>
    </ligandPart>
</feature>
<feature type="binding site" description="axial binding residue" evidence="2">
    <location>
        <position position="98"/>
    </location>
    <ligand>
        <name>heme b</name>
        <dbReference type="ChEBI" id="CHEBI:60344"/>
        <label>b566</label>
    </ligand>
    <ligandPart>
        <name>Fe</name>
        <dbReference type="ChEBI" id="CHEBI:18248"/>
    </ligandPart>
</feature>
<feature type="binding site" description="axial binding residue" evidence="2">
    <location>
        <position position="183"/>
    </location>
    <ligand>
        <name>heme b</name>
        <dbReference type="ChEBI" id="CHEBI:60344"/>
        <label>b562</label>
    </ligand>
    <ligandPart>
        <name>Fe</name>
        <dbReference type="ChEBI" id="CHEBI:18248"/>
    </ligandPart>
</feature>
<feature type="binding site" description="axial binding residue" evidence="2">
    <location>
        <position position="197"/>
    </location>
    <ligand>
        <name>heme b</name>
        <dbReference type="ChEBI" id="CHEBI:60344"/>
        <label>b566</label>
    </ligand>
    <ligandPart>
        <name>Fe</name>
        <dbReference type="ChEBI" id="CHEBI:18248"/>
    </ligandPart>
</feature>
<feature type="binding site" evidence="2">
    <location>
        <position position="202"/>
    </location>
    <ligand>
        <name>a ubiquinone</name>
        <dbReference type="ChEBI" id="CHEBI:16389"/>
    </ligand>
</feature>
<dbReference type="EMBL" id="X74260">
    <property type="protein sequence ID" value="CAA52319.1"/>
    <property type="molecule type" value="Genomic_DNA"/>
</dbReference>
<dbReference type="EMBL" id="U12296">
    <property type="protein sequence ID" value="AAA80477.1"/>
    <property type="molecule type" value="Genomic_DNA"/>
</dbReference>
<dbReference type="EMBL" id="U12295">
    <property type="protein sequence ID" value="AAA80476.1"/>
    <property type="molecule type" value="Genomic_DNA"/>
</dbReference>
<dbReference type="RefSeq" id="YP_009058680.1">
    <property type="nucleotide sequence ID" value="NC_024869.1"/>
</dbReference>
<dbReference type="SMR" id="Q36222"/>
<dbReference type="GeneID" id="20357087"/>
<dbReference type="CTD" id="4519"/>
<dbReference type="GO" id="GO:0005743">
    <property type="term" value="C:mitochondrial inner membrane"/>
    <property type="evidence" value="ECO:0007669"/>
    <property type="project" value="UniProtKB-SubCell"/>
</dbReference>
<dbReference type="GO" id="GO:0045275">
    <property type="term" value="C:respiratory chain complex III"/>
    <property type="evidence" value="ECO:0007669"/>
    <property type="project" value="InterPro"/>
</dbReference>
<dbReference type="GO" id="GO:0046872">
    <property type="term" value="F:metal ion binding"/>
    <property type="evidence" value="ECO:0007669"/>
    <property type="project" value="UniProtKB-KW"/>
</dbReference>
<dbReference type="GO" id="GO:0008121">
    <property type="term" value="F:ubiquinol-cytochrome-c reductase activity"/>
    <property type="evidence" value="ECO:0007669"/>
    <property type="project" value="InterPro"/>
</dbReference>
<dbReference type="GO" id="GO:0006122">
    <property type="term" value="P:mitochondrial electron transport, ubiquinol to cytochrome c"/>
    <property type="evidence" value="ECO:0007669"/>
    <property type="project" value="TreeGrafter"/>
</dbReference>
<dbReference type="CDD" id="cd00290">
    <property type="entry name" value="cytochrome_b_C"/>
    <property type="match status" value="1"/>
</dbReference>
<dbReference type="CDD" id="cd00284">
    <property type="entry name" value="Cytochrome_b_N"/>
    <property type="match status" value="1"/>
</dbReference>
<dbReference type="FunFam" id="1.20.810.10:FF:000002">
    <property type="entry name" value="Cytochrome b"/>
    <property type="match status" value="1"/>
</dbReference>
<dbReference type="Gene3D" id="1.20.810.10">
    <property type="entry name" value="Cytochrome Bc1 Complex, Chain C"/>
    <property type="match status" value="1"/>
</dbReference>
<dbReference type="InterPro" id="IPR005798">
    <property type="entry name" value="Cyt_b/b6_C"/>
</dbReference>
<dbReference type="InterPro" id="IPR036150">
    <property type="entry name" value="Cyt_b/b6_C_sf"/>
</dbReference>
<dbReference type="InterPro" id="IPR005797">
    <property type="entry name" value="Cyt_b/b6_N"/>
</dbReference>
<dbReference type="InterPro" id="IPR027387">
    <property type="entry name" value="Cytb/b6-like_sf"/>
</dbReference>
<dbReference type="InterPro" id="IPR030689">
    <property type="entry name" value="Cytochrome_b"/>
</dbReference>
<dbReference type="InterPro" id="IPR048260">
    <property type="entry name" value="Cytochrome_b_C_euk/bac"/>
</dbReference>
<dbReference type="InterPro" id="IPR048259">
    <property type="entry name" value="Cytochrome_b_N_euk/bac"/>
</dbReference>
<dbReference type="InterPro" id="IPR016174">
    <property type="entry name" value="Di-haem_cyt_TM"/>
</dbReference>
<dbReference type="PANTHER" id="PTHR19271">
    <property type="entry name" value="CYTOCHROME B"/>
    <property type="match status" value="1"/>
</dbReference>
<dbReference type="PANTHER" id="PTHR19271:SF16">
    <property type="entry name" value="CYTOCHROME B"/>
    <property type="match status" value="1"/>
</dbReference>
<dbReference type="Pfam" id="PF00032">
    <property type="entry name" value="Cytochrom_B_C"/>
    <property type="match status" value="1"/>
</dbReference>
<dbReference type="Pfam" id="PF00033">
    <property type="entry name" value="Cytochrome_B"/>
    <property type="match status" value="1"/>
</dbReference>
<dbReference type="PIRSF" id="PIRSF038885">
    <property type="entry name" value="COB"/>
    <property type="match status" value="1"/>
</dbReference>
<dbReference type="SUPFAM" id="SSF81648">
    <property type="entry name" value="a domain/subunit of cytochrome bc1 complex (Ubiquinol-cytochrome c reductase)"/>
    <property type="match status" value="1"/>
</dbReference>
<dbReference type="SUPFAM" id="SSF81342">
    <property type="entry name" value="Transmembrane di-heme cytochromes"/>
    <property type="match status" value="1"/>
</dbReference>
<dbReference type="PROSITE" id="PS51003">
    <property type="entry name" value="CYTB_CTER"/>
    <property type="match status" value="1"/>
</dbReference>
<dbReference type="PROSITE" id="PS51002">
    <property type="entry name" value="CYTB_NTER"/>
    <property type="match status" value="1"/>
</dbReference>
<accession>Q36222</accession>
<accession>Q37054</accession>
<protein>
    <recommendedName>
        <fullName>Cytochrome b</fullName>
    </recommendedName>
    <alternativeName>
        <fullName>Complex III subunit 3</fullName>
    </alternativeName>
    <alternativeName>
        <fullName>Complex III subunit III</fullName>
    </alternativeName>
    <alternativeName>
        <fullName>Cytochrome b-c1 complex subunit 3</fullName>
    </alternativeName>
    <alternativeName>
        <fullName>Ubiquinol-cytochrome-c reductase complex cytochrome b subunit</fullName>
    </alternativeName>
</protein>